<organism>
    <name type="scientific">Rattus norvegicus</name>
    <name type="common">Rat</name>
    <dbReference type="NCBI Taxonomy" id="10116"/>
    <lineage>
        <taxon>Eukaryota</taxon>
        <taxon>Metazoa</taxon>
        <taxon>Chordata</taxon>
        <taxon>Craniata</taxon>
        <taxon>Vertebrata</taxon>
        <taxon>Euteleostomi</taxon>
        <taxon>Mammalia</taxon>
        <taxon>Eutheria</taxon>
        <taxon>Euarchontoglires</taxon>
        <taxon>Glires</taxon>
        <taxon>Rodentia</taxon>
        <taxon>Myomorpha</taxon>
        <taxon>Muroidea</taxon>
        <taxon>Muridae</taxon>
        <taxon>Murinae</taxon>
        <taxon>Rattus</taxon>
    </lineage>
</organism>
<proteinExistence type="evidence at protein level"/>
<accession>P83748</accession>
<keyword id="KW-1003">Cell membrane</keyword>
<keyword id="KW-0903">Direct protein sequencing</keyword>
<keyword id="KW-1015">Disulfide bond</keyword>
<keyword id="KW-0325">Glycoprotein</keyword>
<keyword id="KW-0336">GPI-anchor</keyword>
<keyword id="KW-0378">Hydrolase</keyword>
<keyword id="KW-0406">Ion transport</keyword>
<keyword id="KW-0449">Lipoprotein</keyword>
<keyword id="KW-0472">Membrane</keyword>
<keyword id="KW-0645">Protease</keyword>
<keyword id="KW-1185">Reference proteome</keyword>
<keyword id="KW-0720">Serine protease</keyword>
<keyword id="KW-0732">Signal</keyword>
<keyword id="KW-0915">Sodium</keyword>
<keyword id="KW-0739">Sodium transport</keyword>
<keyword id="KW-0813">Transport</keyword>
<keyword id="KW-0865">Zymogen</keyword>
<reference evidence="7" key="1">
    <citation type="journal article" date="2003" name="Biol. Chem.">
        <title>Cloning and characterization of a transmembrane-type serine protease from rat kidney, a new sodium channel activator.</title>
        <authorList>
            <person name="Okumura Y."/>
            <person name="Nishikawa M."/>
            <person name="Cui P."/>
            <person name="Shiota M."/>
            <person name="Nakamura Y."/>
            <person name="Adachi M."/>
            <person name="Kitamura K."/>
            <person name="Tomita K."/>
            <person name="Kido H."/>
        </authorList>
    </citation>
    <scope>NUCLEOTIDE SEQUENCE [MRNA]</scope>
    <scope>PARTIAL PROTEIN SEQUENCE</scope>
    <scope>GPI-ANCHOR AT SER-275</scope>
    <scope>FUNCTION</scope>
    <scope>ACTIVITY REGULATION</scope>
    <scope>TISSUE SPECIFICITY</scope>
    <scope>INDUCTION</scope>
    <source>
        <strain evidence="9">Sprague-Dawley</strain>
        <tissue evidence="9">Kidney</tissue>
    </source>
</reference>
<sequence>MESWARCIFLLLLQILTGGRGDILHSGAGKIVGGQDAPEGRWPWQVSLRTEKEGHICGGSLIHEVWVLTAAHCFRRPLNSSFYHVKVGGLTLSLTEPHSTLVAVRNIFVYPTYLWEDASSGDIALLRLDTPLQPSQFSPVCLPQAQAPLTPGTVCWVTGWGATHERELASVLQELAVPLLDSEDCERMYHIGETSLSGKRVIQSDMLCAGFVEGQKDSCQGDSGGPLVCAINSSWIQVGITSWGIGCARPNKPGVYTRVPDYVDWIQRTLAENHSDAYGCRSRASGAYPALLLVLLAFALPESL</sequence>
<feature type="signal peptide" evidence="3">
    <location>
        <begin position="1"/>
        <end position="21"/>
    </location>
</feature>
<feature type="propeptide" id="PRO_0000027864" description="Activation peptide" evidence="3 5">
    <location>
        <begin position="22"/>
        <end position="30"/>
    </location>
</feature>
<feature type="chain" id="PRO_0000027865" description="Serine protease 30">
    <location>
        <begin position="31"/>
        <end position="275"/>
    </location>
</feature>
<feature type="propeptide" id="PRO_0000027866" description="Removed in mature form" evidence="7">
    <location>
        <begin position="276"/>
        <end position="304"/>
    </location>
</feature>
<feature type="domain" description="Peptidase S1" evidence="4">
    <location>
        <begin position="31"/>
        <end position="271"/>
    </location>
</feature>
<feature type="active site" description="Charge relay system" evidence="1">
    <location>
        <position position="72"/>
    </location>
</feature>
<feature type="active site" description="Charge relay system" evidence="1">
    <location>
        <position position="122"/>
    </location>
</feature>
<feature type="active site" description="Charge relay system" evidence="1">
    <location>
        <position position="223"/>
    </location>
</feature>
<feature type="lipid moiety-binding region" description="GPI-anchor amidated serine" evidence="8">
    <location>
        <position position="275"/>
    </location>
</feature>
<feature type="glycosylation site" description="N-linked (GlcNAc...) asparagine" evidence="3">
    <location>
        <position position="79"/>
    </location>
</feature>
<feature type="glycosylation site" description="N-linked (GlcNAc...) asparagine" evidence="3">
    <location>
        <position position="232"/>
    </location>
</feature>
<feature type="glycosylation site" description="N-linked (GlcNAc...) asparagine" evidence="3">
    <location>
        <position position="273"/>
    </location>
</feature>
<feature type="disulfide bond" evidence="1 4">
    <location>
        <begin position="57"/>
        <end position="73"/>
    </location>
</feature>
<feature type="disulfide bond" evidence="1 4">
    <location>
        <begin position="155"/>
        <end position="229"/>
    </location>
</feature>
<feature type="disulfide bond" evidence="1 4">
    <location>
        <begin position="185"/>
        <end position="208"/>
    </location>
</feature>
<feature type="disulfide bond" evidence="1 4">
    <location>
        <begin position="219"/>
        <end position="247"/>
    </location>
</feature>
<gene>
    <name type="primary">Prss30</name>
    <name evidence="2" type="synonym">Disp</name>
    <name type="synonym">Tmprss8</name>
    <name type="synonym">Tmsp-1</name>
    <name evidence="6" type="synonym">Tmsp1</name>
</gene>
<protein>
    <recommendedName>
        <fullName>Serine protease 30</fullName>
        <ecNumber>3.4.21.-</ecNumber>
    </recommendedName>
    <alternativeName>
        <fullName>Distal intestinal serine protease</fullName>
    </alternativeName>
    <alternativeName>
        <fullName>Transmembrane serine protease 1</fullName>
        <shortName>TMSP-1</shortName>
    </alternativeName>
    <alternativeName>
        <fullName>Transmembrane serine protease 8</fullName>
    </alternativeName>
</protein>
<evidence type="ECO:0000250" key="1">
    <source>
        <dbReference type="UniProtKB" id="P49863"/>
    </source>
</evidence>
<evidence type="ECO:0000250" key="2">
    <source>
        <dbReference type="UniProtKB" id="Q9QYZ9"/>
    </source>
</evidence>
<evidence type="ECO:0000255" key="3"/>
<evidence type="ECO:0000255" key="4">
    <source>
        <dbReference type="PROSITE-ProRule" id="PRU00274"/>
    </source>
</evidence>
<evidence type="ECO:0000269" key="5">
    <source>
    </source>
</evidence>
<evidence type="ECO:0000303" key="6">
    <source>
    </source>
</evidence>
<evidence type="ECO:0000305" key="7"/>
<evidence type="ECO:0000305" key="8">
    <source>
    </source>
</evidence>
<evidence type="ECO:0000312" key="9">
    <source>
        <dbReference type="EMBL" id="BAD01655.1"/>
    </source>
</evidence>
<name>PRS30_RAT</name>
<dbReference type="EC" id="3.4.21.-"/>
<dbReference type="EMBL" id="AB073023">
    <property type="protein sequence ID" value="BAD01655.1"/>
    <property type="molecule type" value="mRNA"/>
</dbReference>
<dbReference type="RefSeq" id="NP_955403.1">
    <property type="nucleotide sequence ID" value="NM_199371.1"/>
</dbReference>
<dbReference type="SMR" id="P83748"/>
<dbReference type="FunCoup" id="P83748">
    <property type="interactions" value="19"/>
</dbReference>
<dbReference type="STRING" id="10116.ENSRNOP00000037368"/>
<dbReference type="MEROPS" id="S01.042"/>
<dbReference type="TCDB" id="8.A.131.1.14">
    <property type="family name" value="the transmembrane protease serine 3 (tmprss3) family"/>
</dbReference>
<dbReference type="CarbonylDB" id="P83748"/>
<dbReference type="GlyCosmos" id="P83748">
    <property type="glycosylation" value="3 sites, No reported glycans"/>
</dbReference>
<dbReference type="GlyGen" id="P83748">
    <property type="glycosylation" value="3 sites"/>
</dbReference>
<dbReference type="PaxDb" id="10116-ENSRNOP00000037368"/>
<dbReference type="GeneID" id="287106"/>
<dbReference type="KEGG" id="rno:287106"/>
<dbReference type="UCSC" id="RGD:735142">
    <property type="organism name" value="rat"/>
</dbReference>
<dbReference type="AGR" id="RGD:735142"/>
<dbReference type="CTD" id="30943"/>
<dbReference type="RGD" id="735142">
    <property type="gene designation" value="Prss30"/>
</dbReference>
<dbReference type="eggNOG" id="KOG3627">
    <property type="taxonomic scope" value="Eukaryota"/>
</dbReference>
<dbReference type="InParanoid" id="P83748"/>
<dbReference type="OrthoDB" id="93664at2759"/>
<dbReference type="PhylomeDB" id="P83748"/>
<dbReference type="PRO" id="PR:P83748"/>
<dbReference type="Proteomes" id="UP000002494">
    <property type="component" value="Unplaced"/>
</dbReference>
<dbReference type="GO" id="GO:0005615">
    <property type="term" value="C:extracellular space"/>
    <property type="evidence" value="ECO:0000318"/>
    <property type="project" value="GO_Central"/>
</dbReference>
<dbReference type="GO" id="GO:0005886">
    <property type="term" value="C:plasma membrane"/>
    <property type="evidence" value="ECO:0000303"/>
    <property type="project" value="UniProtKB"/>
</dbReference>
<dbReference type="GO" id="GO:0098552">
    <property type="term" value="C:side of membrane"/>
    <property type="evidence" value="ECO:0007669"/>
    <property type="project" value="UniProtKB-KW"/>
</dbReference>
<dbReference type="GO" id="GO:0004252">
    <property type="term" value="F:serine-type endopeptidase activity"/>
    <property type="evidence" value="ECO:0000314"/>
    <property type="project" value="UniProtKB"/>
</dbReference>
<dbReference type="GO" id="GO:0017080">
    <property type="term" value="F:sodium channel regulator activity"/>
    <property type="evidence" value="ECO:0000314"/>
    <property type="project" value="UniProtKB"/>
</dbReference>
<dbReference type="GO" id="GO:0006508">
    <property type="term" value="P:proteolysis"/>
    <property type="evidence" value="ECO:0000314"/>
    <property type="project" value="UniProtKB"/>
</dbReference>
<dbReference type="GO" id="GO:0006814">
    <property type="term" value="P:sodium ion transport"/>
    <property type="evidence" value="ECO:0000314"/>
    <property type="project" value="UniProtKB"/>
</dbReference>
<dbReference type="CDD" id="cd00190">
    <property type="entry name" value="Tryp_SPc"/>
    <property type="match status" value="1"/>
</dbReference>
<dbReference type="FunFam" id="2.40.10.10:FF:000039">
    <property type="entry name" value="Brain-specific serine protease 4"/>
    <property type="match status" value="1"/>
</dbReference>
<dbReference type="Gene3D" id="2.40.10.10">
    <property type="entry name" value="Trypsin-like serine proteases"/>
    <property type="match status" value="1"/>
</dbReference>
<dbReference type="InterPro" id="IPR009003">
    <property type="entry name" value="Peptidase_S1_PA"/>
</dbReference>
<dbReference type="InterPro" id="IPR043504">
    <property type="entry name" value="Peptidase_S1_PA_chymotrypsin"/>
</dbReference>
<dbReference type="InterPro" id="IPR001314">
    <property type="entry name" value="Peptidase_S1A"/>
</dbReference>
<dbReference type="InterPro" id="IPR001254">
    <property type="entry name" value="Trypsin_dom"/>
</dbReference>
<dbReference type="InterPro" id="IPR018114">
    <property type="entry name" value="TRYPSIN_HIS"/>
</dbReference>
<dbReference type="InterPro" id="IPR033116">
    <property type="entry name" value="TRYPSIN_SER"/>
</dbReference>
<dbReference type="PANTHER" id="PTHR24253:SF153">
    <property type="entry name" value="SERINE PROTEASE HEPSIN"/>
    <property type="match status" value="1"/>
</dbReference>
<dbReference type="PANTHER" id="PTHR24253">
    <property type="entry name" value="TRANSMEMBRANE PROTEASE SERINE"/>
    <property type="match status" value="1"/>
</dbReference>
<dbReference type="Pfam" id="PF00089">
    <property type="entry name" value="Trypsin"/>
    <property type="match status" value="1"/>
</dbReference>
<dbReference type="PRINTS" id="PR00722">
    <property type="entry name" value="CHYMOTRYPSIN"/>
</dbReference>
<dbReference type="SMART" id="SM00020">
    <property type="entry name" value="Tryp_SPc"/>
    <property type="match status" value="1"/>
</dbReference>
<dbReference type="SUPFAM" id="SSF50494">
    <property type="entry name" value="Trypsin-like serine proteases"/>
    <property type="match status" value="1"/>
</dbReference>
<dbReference type="PROSITE" id="PS50240">
    <property type="entry name" value="TRYPSIN_DOM"/>
    <property type="match status" value="1"/>
</dbReference>
<dbReference type="PROSITE" id="PS00134">
    <property type="entry name" value="TRYPSIN_HIS"/>
    <property type="match status" value="1"/>
</dbReference>
<dbReference type="PROSITE" id="PS00135">
    <property type="entry name" value="TRYPSIN_SER"/>
    <property type="match status" value="1"/>
</dbReference>
<comment type="function">
    <text evidence="5">Selectively cleaves synthetic peptide substrates of trypsin. Activates the epithelial sodium channel ENaC.</text>
</comment>
<comment type="activity regulation">
    <text evidence="5">Inhibited by aprotinin, leupeptin, benzamidine and soybean trypsin inhibitor. Partially inhibited by PMSF and DFP.</text>
</comment>
<comment type="biophysicochemical properties">
    <phDependence>
        <text>Optimum pH is 9.0.</text>
    </phDependence>
</comment>
<comment type="subcellular location">
    <subcellularLocation>
        <location evidence="7">Cell membrane</location>
        <topology evidence="7">Lipid-anchor</topology>
        <topology evidence="7">GPI-anchor</topology>
    </subcellularLocation>
</comment>
<comment type="tissue specificity">
    <text evidence="5">Expressed predominantly in kidney, small intestine and stomach and moderately in thymus, lung, spleen, testis and skin. In the kidney, expressed mainly in collecting duct of renal medulla and cortex.</text>
</comment>
<comment type="induction">
    <text evidence="5">By aldosterone.</text>
</comment>
<comment type="similarity">
    <text evidence="4">Belongs to the peptidase S1 family.</text>
</comment>